<organism>
    <name type="scientific">Lactobacillus johnsonii (strain CNCM I-12250 / La1 / NCC 533)</name>
    <dbReference type="NCBI Taxonomy" id="257314"/>
    <lineage>
        <taxon>Bacteria</taxon>
        <taxon>Bacillati</taxon>
        <taxon>Bacillota</taxon>
        <taxon>Bacilli</taxon>
        <taxon>Lactobacillales</taxon>
        <taxon>Lactobacillaceae</taxon>
        <taxon>Lactobacillus</taxon>
    </lineage>
</organism>
<comment type="function">
    <text evidence="1">Specifically methylates the N7 position of a guanine in 16S rRNA.</text>
</comment>
<comment type="subcellular location">
    <subcellularLocation>
        <location evidence="1">Cytoplasm</location>
    </subcellularLocation>
</comment>
<comment type="similarity">
    <text evidence="1">Belongs to the methyltransferase superfamily. RNA methyltransferase RsmG family.</text>
</comment>
<gene>
    <name evidence="1" type="primary">rsmG</name>
    <name type="ordered locus">LJ_0554</name>
</gene>
<sequence length="239" mass="26694">MNPEIFAKELAKYGFELNEKQKKQFATYYDKLVEFNKKVNLTRITDKNEVYLKHFFDSITPLLEFPDLFKGEKTLCDVGAGAGFPSLPIKILCPNLSITIVDSLGKRLKFLDELVNDLGLDKVTLVHSRAEDAGQNKDLREKFDLVTGRAVARMSVLSEYCLPLAKVGGYLVALKGPKAQDELAEAKHAIDVLGGKVEDVKELTLPDTDDDRTLIVVEKIKATPKKYPRQAGTPNKKPL</sequence>
<feature type="chain" id="PRO_0000184267" description="Ribosomal RNA small subunit methyltransferase G">
    <location>
        <begin position="1"/>
        <end position="239"/>
    </location>
</feature>
<feature type="binding site" evidence="1">
    <location>
        <position position="79"/>
    </location>
    <ligand>
        <name>S-adenosyl-L-methionine</name>
        <dbReference type="ChEBI" id="CHEBI:59789"/>
    </ligand>
</feature>
<feature type="binding site" evidence="1">
    <location>
        <position position="84"/>
    </location>
    <ligand>
        <name>S-adenosyl-L-methionine</name>
        <dbReference type="ChEBI" id="CHEBI:59789"/>
    </ligand>
</feature>
<feature type="binding site" evidence="1">
    <location>
        <begin position="130"/>
        <end position="131"/>
    </location>
    <ligand>
        <name>S-adenosyl-L-methionine</name>
        <dbReference type="ChEBI" id="CHEBI:59789"/>
    </ligand>
</feature>
<feature type="binding site" evidence="1">
    <location>
        <position position="149"/>
    </location>
    <ligand>
        <name>S-adenosyl-L-methionine</name>
        <dbReference type="ChEBI" id="CHEBI:59789"/>
    </ligand>
</feature>
<reference key="1">
    <citation type="journal article" date="2004" name="Proc. Natl. Acad. Sci. U.S.A.">
        <title>The genome sequence of the probiotic intestinal bacterium Lactobacillus johnsonii NCC 533.</title>
        <authorList>
            <person name="Pridmore R.D."/>
            <person name="Berger B."/>
            <person name="Desiere F."/>
            <person name="Vilanova D."/>
            <person name="Barretto C."/>
            <person name="Pittet A.-C."/>
            <person name="Zwahlen M.-C."/>
            <person name="Rouvet M."/>
            <person name="Altermann E."/>
            <person name="Barrangou R."/>
            <person name="Mollet B."/>
            <person name="Mercenier A."/>
            <person name="Klaenhammer T."/>
            <person name="Arigoni F."/>
            <person name="Schell M.A."/>
        </authorList>
    </citation>
    <scope>NUCLEOTIDE SEQUENCE [LARGE SCALE GENOMIC DNA]</scope>
    <source>
        <strain>CNCM I-1225 / La1 / NCC 533</strain>
    </source>
</reference>
<accession>Q74HM3</accession>
<proteinExistence type="inferred from homology"/>
<name>RSMG_LACJO</name>
<protein>
    <recommendedName>
        <fullName evidence="1">Ribosomal RNA small subunit methyltransferase G</fullName>
        <ecNumber evidence="1">2.1.1.-</ecNumber>
    </recommendedName>
    <alternativeName>
        <fullName evidence="1">16S rRNA 7-methylguanosine methyltransferase</fullName>
        <shortName evidence="1">16S rRNA m7G methyltransferase</shortName>
    </alternativeName>
</protein>
<dbReference type="EC" id="2.1.1.-" evidence="1"/>
<dbReference type="EMBL" id="AE017198">
    <property type="protein sequence ID" value="AAS09667.1"/>
    <property type="molecule type" value="Genomic_DNA"/>
</dbReference>
<dbReference type="RefSeq" id="WP_011162527.1">
    <property type="nucleotide sequence ID" value="NC_005362.1"/>
</dbReference>
<dbReference type="SMR" id="Q74HM3"/>
<dbReference type="KEGG" id="ljo:LJ_0554"/>
<dbReference type="eggNOG" id="COG0357">
    <property type="taxonomic scope" value="Bacteria"/>
</dbReference>
<dbReference type="HOGENOM" id="CLU_065341_0_2_9"/>
<dbReference type="Proteomes" id="UP000000581">
    <property type="component" value="Chromosome"/>
</dbReference>
<dbReference type="GO" id="GO:0005829">
    <property type="term" value="C:cytosol"/>
    <property type="evidence" value="ECO:0007669"/>
    <property type="project" value="TreeGrafter"/>
</dbReference>
<dbReference type="GO" id="GO:0070043">
    <property type="term" value="F:rRNA (guanine-N7-)-methyltransferase activity"/>
    <property type="evidence" value="ECO:0007669"/>
    <property type="project" value="UniProtKB-UniRule"/>
</dbReference>
<dbReference type="CDD" id="cd02440">
    <property type="entry name" value="AdoMet_MTases"/>
    <property type="match status" value="1"/>
</dbReference>
<dbReference type="FunFam" id="3.40.50.150:FF:000041">
    <property type="entry name" value="Ribosomal RNA small subunit methyltransferase G"/>
    <property type="match status" value="1"/>
</dbReference>
<dbReference type="Gene3D" id="3.40.50.150">
    <property type="entry name" value="Vaccinia Virus protein VP39"/>
    <property type="match status" value="1"/>
</dbReference>
<dbReference type="HAMAP" id="MF_00074">
    <property type="entry name" value="16SrRNA_methyltr_G"/>
    <property type="match status" value="1"/>
</dbReference>
<dbReference type="InterPro" id="IPR003682">
    <property type="entry name" value="rRNA_ssu_MeTfrase_G"/>
</dbReference>
<dbReference type="InterPro" id="IPR029063">
    <property type="entry name" value="SAM-dependent_MTases_sf"/>
</dbReference>
<dbReference type="NCBIfam" id="TIGR00138">
    <property type="entry name" value="rsmG_gidB"/>
    <property type="match status" value="1"/>
</dbReference>
<dbReference type="PANTHER" id="PTHR31760">
    <property type="entry name" value="S-ADENOSYL-L-METHIONINE-DEPENDENT METHYLTRANSFERASES SUPERFAMILY PROTEIN"/>
    <property type="match status" value="1"/>
</dbReference>
<dbReference type="PANTHER" id="PTHR31760:SF0">
    <property type="entry name" value="S-ADENOSYL-L-METHIONINE-DEPENDENT METHYLTRANSFERASES SUPERFAMILY PROTEIN"/>
    <property type="match status" value="1"/>
</dbReference>
<dbReference type="Pfam" id="PF02527">
    <property type="entry name" value="GidB"/>
    <property type="match status" value="1"/>
</dbReference>
<dbReference type="PIRSF" id="PIRSF003078">
    <property type="entry name" value="GidB"/>
    <property type="match status" value="1"/>
</dbReference>
<dbReference type="SUPFAM" id="SSF53335">
    <property type="entry name" value="S-adenosyl-L-methionine-dependent methyltransferases"/>
    <property type="match status" value="1"/>
</dbReference>
<keyword id="KW-0963">Cytoplasm</keyword>
<keyword id="KW-0489">Methyltransferase</keyword>
<keyword id="KW-0698">rRNA processing</keyword>
<keyword id="KW-0949">S-adenosyl-L-methionine</keyword>
<keyword id="KW-0808">Transferase</keyword>
<evidence type="ECO:0000255" key="1">
    <source>
        <dbReference type="HAMAP-Rule" id="MF_00074"/>
    </source>
</evidence>